<feature type="chain" id="PRO_0000065186" description="Putative sulfotransferase vep-2">
    <location>
        <begin position="1"/>
        <end position="321"/>
    </location>
</feature>
<feature type="transmembrane region" description="Helical" evidence="1">
    <location>
        <begin position="11"/>
        <end position="31"/>
    </location>
</feature>
<keyword id="KW-0472">Membrane</keyword>
<keyword id="KW-1185">Reference proteome</keyword>
<keyword id="KW-0812">Transmembrane</keyword>
<keyword id="KW-1133">Transmembrane helix</keyword>
<sequence length="321" mass="37402">MFAPHTNIMSIARVLIIIASISVICITLFISRPVTRESSIIIAPKTRDMRAEQIRLFALNAMVKANSHTLPPRSKNISAKNLCSRRMTCAPHNRRYETMLKVSPKYKMVNCVVQKSMSTMMTGAMCYLYDEKAYADSGRTFDDEFSTRFCKNKNEFSSVNAVRDAYNISFVKTDWLFSMITRDPIDRFVSGYVDRCVRISQKNETGQCNGCGLNMTCFIENEYKRLMEISFKRKTHRTMEDAHFFPQIWHCDLNEDLEFFEFIQYSNNPETTMMPQLEEMLKRQKVPSDSIRFIKNELLYKKSSHSTTGTPASRFYRSRYS</sequence>
<comment type="subcellular location">
    <subcellularLocation>
        <location evidence="2">Membrane</location>
        <topology evidence="2">Single-pass membrane protein</topology>
    </subcellularLocation>
</comment>
<comment type="similarity">
    <text evidence="2">To C.elegans C41C4.1 and C18B2.2.</text>
</comment>
<organism>
    <name type="scientific">Caenorhabditis elegans</name>
    <dbReference type="NCBI Taxonomy" id="6239"/>
    <lineage>
        <taxon>Eukaryota</taxon>
        <taxon>Metazoa</taxon>
        <taxon>Ecdysozoa</taxon>
        <taxon>Nematoda</taxon>
        <taxon>Chromadorea</taxon>
        <taxon>Rhabditida</taxon>
        <taxon>Rhabditina</taxon>
        <taxon>Rhabditomorpha</taxon>
        <taxon>Rhabditoidea</taxon>
        <taxon>Rhabditidae</taxon>
        <taxon>Peloderinae</taxon>
        <taxon>Caenorhabditis</taxon>
    </lineage>
</organism>
<gene>
    <name evidence="3" type="primary">vep-2</name>
    <name type="ORF">C18B2.1</name>
</gene>
<accession>Q18079</accession>
<protein>
    <recommendedName>
        <fullName evidence="2">Putative sulfotransferase vep-2</fullName>
    </recommendedName>
    <alternativeName>
        <fullName>Uncharacterized protein C18B2.1</fullName>
    </alternativeName>
    <alternativeName>
        <fullName evidence="3">Variable ectoderm patterning vep-2</fullName>
    </alternativeName>
</protein>
<evidence type="ECO:0000255" key="1"/>
<evidence type="ECO:0000305" key="2"/>
<evidence type="ECO:0000312" key="3">
    <source>
        <dbReference type="WormBase" id="C18B2.1"/>
    </source>
</evidence>
<reference key="1">
    <citation type="journal article" date="1998" name="Science">
        <title>Genome sequence of the nematode C. elegans: a platform for investigating biology.</title>
        <authorList>
            <consortium name="The C. elegans sequencing consortium"/>
        </authorList>
    </citation>
    <scope>NUCLEOTIDE SEQUENCE [LARGE SCALE GENOMIC DNA]</scope>
    <source>
        <strain>Bristol N2</strain>
    </source>
</reference>
<proteinExistence type="predicted"/>
<name>YXT1_CAEEL</name>
<dbReference type="EMBL" id="FO080605">
    <property type="protein sequence ID" value="CCD65072.1"/>
    <property type="molecule type" value="Genomic_DNA"/>
</dbReference>
<dbReference type="PIR" id="T15554">
    <property type="entry name" value="T15554"/>
</dbReference>
<dbReference type="RefSeq" id="NP_508624.1">
    <property type="nucleotide sequence ID" value="NM_076223.1"/>
</dbReference>
<dbReference type="FunCoup" id="Q18079">
    <property type="interactions" value="11"/>
</dbReference>
<dbReference type="STRING" id="6239.C18B2.1.1"/>
<dbReference type="PaxDb" id="6239-C18B2.1"/>
<dbReference type="EnsemblMetazoa" id="C18B2.1.1">
    <property type="protein sequence ID" value="C18B2.1.1"/>
    <property type="gene ID" value="WBGene00015952"/>
</dbReference>
<dbReference type="GeneID" id="182765"/>
<dbReference type="KEGG" id="cel:CELE_C18B2.1"/>
<dbReference type="UCSC" id="C18B2.1">
    <property type="organism name" value="c. elegans"/>
</dbReference>
<dbReference type="AGR" id="WB:WBGene00015952"/>
<dbReference type="CTD" id="182765"/>
<dbReference type="WormBase" id="C18B2.1">
    <property type="protein sequence ID" value="CE04040"/>
    <property type="gene ID" value="WBGene00015952"/>
    <property type="gene designation" value="vep-2"/>
</dbReference>
<dbReference type="eggNOG" id="KOG4651">
    <property type="taxonomic scope" value="Eukaryota"/>
</dbReference>
<dbReference type="GeneTree" id="ENSGT00970000195842"/>
<dbReference type="HOGENOM" id="CLU_069458_1_0_1"/>
<dbReference type="InParanoid" id="Q18079"/>
<dbReference type="OMA" id="GAMCYLY"/>
<dbReference type="OrthoDB" id="408912at2759"/>
<dbReference type="PhylomeDB" id="Q18079"/>
<dbReference type="PRO" id="PR:Q18079"/>
<dbReference type="Proteomes" id="UP000001940">
    <property type="component" value="Chromosome X"/>
</dbReference>
<dbReference type="Bgee" id="WBGene00015952">
    <property type="expression patterns" value="Expressed in material anatomical entity and 2 other cell types or tissues"/>
</dbReference>
<dbReference type="GO" id="GO:0016020">
    <property type="term" value="C:membrane"/>
    <property type="evidence" value="ECO:0007669"/>
    <property type="project" value="UniProtKB-SubCell"/>
</dbReference>
<dbReference type="GO" id="GO:0047756">
    <property type="term" value="F:chondroitin 4-sulfotransferase activity"/>
    <property type="evidence" value="ECO:0007669"/>
    <property type="project" value="InterPro"/>
</dbReference>
<dbReference type="GO" id="GO:1902884">
    <property type="term" value="P:positive regulation of response to oxidative stress"/>
    <property type="evidence" value="ECO:0007669"/>
    <property type="project" value="InterPro"/>
</dbReference>
<dbReference type="InterPro" id="IPR007669">
    <property type="entry name" value="Chst-1-like"/>
</dbReference>
<dbReference type="InterPro" id="IPR005331">
    <property type="entry name" value="Sulfotransferase"/>
</dbReference>
<dbReference type="PANTHER" id="PTHR22900">
    <property type="entry name" value="PROTEIN CBG14245-RELATED"/>
    <property type="match status" value="1"/>
</dbReference>
<dbReference type="PANTHER" id="PTHR22900:SF4">
    <property type="entry name" value="PROTEIN CBG14246"/>
    <property type="match status" value="1"/>
</dbReference>
<dbReference type="Pfam" id="PF03567">
    <property type="entry name" value="Sulfotransfer_2"/>
    <property type="match status" value="1"/>
</dbReference>